<reference key="1">
    <citation type="journal article" date="2011" name="MBio">
        <title>Novel metabolic attributes of the genus Cyanothece, comprising a group of unicellular nitrogen-fixing Cyanobacteria.</title>
        <authorList>
            <person name="Bandyopadhyay A."/>
            <person name="Elvitigala T."/>
            <person name="Welsh E."/>
            <person name="Stockel J."/>
            <person name="Liberton M."/>
            <person name="Min H."/>
            <person name="Sherman L.A."/>
            <person name="Pakrasi H.B."/>
        </authorList>
    </citation>
    <scope>NUCLEOTIDE SEQUENCE [LARGE SCALE GENOMIC DNA]</scope>
    <source>
        <strain>PCC 8801 / RF-1</strain>
    </source>
</reference>
<name>Y2554_RIPO1</name>
<proteinExistence type="inferred from homology"/>
<evidence type="ECO:0000255" key="1">
    <source>
        <dbReference type="HAMAP-Rule" id="MF_00274"/>
    </source>
</evidence>
<sequence length="114" mass="12436">MTKGQGFGFGLGKIKELQEAFAKAQQVQAGAQQLQQELEQMEIEGFSEGKLVKVIMSGNQEPRSVTILPEALEKGADELSQLVTDAMKDAYTQSTETMRTKMEELTSGLNLPGL</sequence>
<organism>
    <name type="scientific">Rippkaea orientalis (strain PCC 8801 / RF-1)</name>
    <name type="common">Cyanothece sp. (strain PCC 8801)</name>
    <dbReference type="NCBI Taxonomy" id="41431"/>
    <lineage>
        <taxon>Bacteria</taxon>
        <taxon>Bacillati</taxon>
        <taxon>Cyanobacteriota</taxon>
        <taxon>Cyanophyceae</taxon>
        <taxon>Oscillatoriophycideae</taxon>
        <taxon>Chroococcales</taxon>
        <taxon>Aphanothecaceae</taxon>
        <taxon>Rippkaea</taxon>
        <taxon>Rippkaea orientalis</taxon>
    </lineage>
</organism>
<dbReference type="EMBL" id="CP001287">
    <property type="protein sequence ID" value="ACK66562.1"/>
    <property type="molecule type" value="Genomic_DNA"/>
</dbReference>
<dbReference type="RefSeq" id="WP_012595829.1">
    <property type="nucleotide sequence ID" value="NC_011726.1"/>
</dbReference>
<dbReference type="SMR" id="B7K422"/>
<dbReference type="STRING" id="41431.PCC8801_2554"/>
<dbReference type="KEGG" id="cyp:PCC8801_2554"/>
<dbReference type="eggNOG" id="COG0718">
    <property type="taxonomic scope" value="Bacteria"/>
</dbReference>
<dbReference type="HOGENOM" id="CLU_140930_0_1_3"/>
<dbReference type="OrthoDB" id="487780at2"/>
<dbReference type="Proteomes" id="UP000008204">
    <property type="component" value="Chromosome"/>
</dbReference>
<dbReference type="GO" id="GO:0043590">
    <property type="term" value="C:bacterial nucleoid"/>
    <property type="evidence" value="ECO:0007669"/>
    <property type="project" value="UniProtKB-UniRule"/>
</dbReference>
<dbReference type="GO" id="GO:0005829">
    <property type="term" value="C:cytosol"/>
    <property type="evidence" value="ECO:0007669"/>
    <property type="project" value="TreeGrafter"/>
</dbReference>
<dbReference type="GO" id="GO:0003677">
    <property type="term" value="F:DNA binding"/>
    <property type="evidence" value="ECO:0007669"/>
    <property type="project" value="UniProtKB-UniRule"/>
</dbReference>
<dbReference type="Gene3D" id="3.30.1310.10">
    <property type="entry name" value="Nucleoid-associated protein YbaB-like domain"/>
    <property type="match status" value="1"/>
</dbReference>
<dbReference type="HAMAP" id="MF_00274">
    <property type="entry name" value="DNA_YbaB_EbfC"/>
    <property type="match status" value="1"/>
</dbReference>
<dbReference type="InterPro" id="IPR036894">
    <property type="entry name" value="YbaB-like_sf"/>
</dbReference>
<dbReference type="InterPro" id="IPR004401">
    <property type="entry name" value="YbaB/EbfC"/>
</dbReference>
<dbReference type="NCBIfam" id="TIGR00103">
    <property type="entry name" value="DNA_YbaB_EbfC"/>
    <property type="match status" value="1"/>
</dbReference>
<dbReference type="PANTHER" id="PTHR33449">
    <property type="entry name" value="NUCLEOID-ASSOCIATED PROTEIN YBAB"/>
    <property type="match status" value="1"/>
</dbReference>
<dbReference type="PANTHER" id="PTHR33449:SF1">
    <property type="entry name" value="NUCLEOID-ASSOCIATED PROTEIN YBAB"/>
    <property type="match status" value="1"/>
</dbReference>
<dbReference type="Pfam" id="PF02575">
    <property type="entry name" value="YbaB_DNA_bd"/>
    <property type="match status" value="1"/>
</dbReference>
<dbReference type="PIRSF" id="PIRSF004555">
    <property type="entry name" value="UCP004555"/>
    <property type="match status" value="1"/>
</dbReference>
<dbReference type="SUPFAM" id="SSF82607">
    <property type="entry name" value="YbaB-like"/>
    <property type="match status" value="1"/>
</dbReference>
<keyword id="KW-0963">Cytoplasm</keyword>
<keyword id="KW-0238">DNA-binding</keyword>
<keyword id="KW-1185">Reference proteome</keyword>
<comment type="function">
    <text evidence="1">Binds to DNA and alters its conformation. May be involved in regulation of gene expression, nucleoid organization and DNA protection.</text>
</comment>
<comment type="subunit">
    <text evidence="1">Homodimer.</text>
</comment>
<comment type="subcellular location">
    <subcellularLocation>
        <location evidence="1">Cytoplasm</location>
        <location evidence="1">Nucleoid</location>
    </subcellularLocation>
</comment>
<comment type="similarity">
    <text evidence="1">Belongs to the YbaB/EbfC family.</text>
</comment>
<accession>B7K422</accession>
<protein>
    <recommendedName>
        <fullName evidence="1">Nucleoid-associated protein PCC8801_2554</fullName>
    </recommendedName>
</protein>
<feature type="chain" id="PRO_1000119315" description="Nucleoid-associated protein PCC8801_2554">
    <location>
        <begin position="1"/>
        <end position="114"/>
    </location>
</feature>
<gene>
    <name type="ordered locus">PCC8801_2554</name>
</gene>